<keyword id="KW-0131">Cell cycle</keyword>
<keyword id="KW-0132">Cell division</keyword>
<keyword id="KW-0997">Cell inner membrane</keyword>
<keyword id="KW-1003">Cell membrane</keyword>
<keyword id="KW-0133">Cell shape</keyword>
<keyword id="KW-0961">Cell wall biogenesis/degradation</keyword>
<keyword id="KW-0328">Glycosyltransferase</keyword>
<keyword id="KW-0472">Membrane</keyword>
<keyword id="KW-0573">Peptidoglycan synthesis</keyword>
<keyword id="KW-0808">Transferase</keyword>
<organism>
    <name type="scientific">Paramagnetospirillum magneticum (strain ATCC 700264 / AMB-1)</name>
    <name type="common">Magnetospirillum magneticum</name>
    <dbReference type="NCBI Taxonomy" id="342108"/>
    <lineage>
        <taxon>Bacteria</taxon>
        <taxon>Pseudomonadati</taxon>
        <taxon>Pseudomonadota</taxon>
        <taxon>Alphaproteobacteria</taxon>
        <taxon>Rhodospirillales</taxon>
        <taxon>Magnetospirillaceae</taxon>
        <taxon>Paramagnetospirillum</taxon>
    </lineage>
</organism>
<protein>
    <recommendedName>
        <fullName evidence="1">UDP-N-acetylglucosamine--N-acetylmuramyl-(pentapeptide) pyrophosphoryl-undecaprenol N-acetylglucosamine transferase</fullName>
        <ecNumber evidence="1">2.4.1.227</ecNumber>
    </recommendedName>
    <alternativeName>
        <fullName evidence="1">Undecaprenyl-PP-MurNAc-pentapeptide-UDPGlcNAc GlcNAc transferase</fullName>
    </alternativeName>
</protein>
<sequence length="371" mass="38403">MSTQKPLIALAAGGTGGHVFPAEALASVLLDRGYRLALITDKRGAAYGGTLGKLETFRISAGGIAGRGKLSALRSALELGLGLIQARSILGRIRPAAVIGFGGYASVPGMGAAALAGIPTAIHEQNAVLGRANRLLAGHVRRIATSFAEVSHVEPKLAPKLVHTGMPVRAAILASRDASYAGITAEGPIELLVLGGSQGARILSEVIPAALARLPEALRTRIRIAQQCRPEDLEGVRRAYDGTGIDATLDSFFADVPERLARAHLVIARAGASTVAELTTLGRPAILVPYPFAVDDHQTANAHAAEDCGGAWLMQQDSFTADSLAARLDSLFTHPEALVRTAVCARNVGRPDAAEALADLVVGLIPNESGA</sequence>
<proteinExistence type="inferred from homology"/>
<evidence type="ECO:0000255" key="1">
    <source>
        <dbReference type="HAMAP-Rule" id="MF_00033"/>
    </source>
</evidence>
<accession>Q2W0H3</accession>
<comment type="function">
    <text evidence="1">Cell wall formation. Catalyzes the transfer of a GlcNAc subunit on undecaprenyl-pyrophosphoryl-MurNAc-pentapeptide (lipid intermediate I) to form undecaprenyl-pyrophosphoryl-MurNAc-(pentapeptide)GlcNAc (lipid intermediate II).</text>
</comment>
<comment type="catalytic activity">
    <reaction evidence="1">
        <text>di-trans,octa-cis-undecaprenyl diphospho-N-acetyl-alpha-D-muramoyl-L-alanyl-D-glutamyl-meso-2,6-diaminopimeloyl-D-alanyl-D-alanine + UDP-N-acetyl-alpha-D-glucosamine = di-trans,octa-cis-undecaprenyl diphospho-[N-acetyl-alpha-D-glucosaminyl-(1-&gt;4)]-N-acetyl-alpha-D-muramoyl-L-alanyl-D-glutamyl-meso-2,6-diaminopimeloyl-D-alanyl-D-alanine + UDP + H(+)</text>
        <dbReference type="Rhea" id="RHEA:31227"/>
        <dbReference type="ChEBI" id="CHEBI:15378"/>
        <dbReference type="ChEBI" id="CHEBI:57705"/>
        <dbReference type="ChEBI" id="CHEBI:58223"/>
        <dbReference type="ChEBI" id="CHEBI:61387"/>
        <dbReference type="ChEBI" id="CHEBI:61388"/>
        <dbReference type="EC" id="2.4.1.227"/>
    </reaction>
</comment>
<comment type="pathway">
    <text evidence="1">Cell wall biogenesis; peptidoglycan biosynthesis.</text>
</comment>
<comment type="subcellular location">
    <subcellularLocation>
        <location evidence="1">Cell inner membrane</location>
        <topology evidence="1">Peripheral membrane protein</topology>
        <orientation evidence="1">Cytoplasmic side</orientation>
    </subcellularLocation>
</comment>
<comment type="similarity">
    <text evidence="1">Belongs to the glycosyltransferase 28 family. MurG subfamily.</text>
</comment>
<dbReference type="EC" id="2.4.1.227" evidence="1"/>
<dbReference type="EMBL" id="AP007255">
    <property type="protein sequence ID" value="BAE52652.1"/>
    <property type="molecule type" value="Genomic_DNA"/>
</dbReference>
<dbReference type="RefSeq" id="WP_011386202.1">
    <property type="nucleotide sequence ID" value="NC_007626.1"/>
</dbReference>
<dbReference type="SMR" id="Q2W0H3"/>
<dbReference type="STRING" id="342108.amb3848"/>
<dbReference type="CAZy" id="GT28">
    <property type="family name" value="Glycosyltransferase Family 28"/>
</dbReference>
<dbReference type="KEGG" id="mag:amb3848"/>
<dbReference type="HOGENOM" id="CLU_037404_2_1_5"/>
<dbReference type="OrthoDB" id="9808936at2"/>
<dbReference type="UniPathway" id="UPA00219"/>
<dbReference type="Proteomes" id="UP000007058">
    <property type="component" value="Chromosome"/>
</dbReference>
<dbReference type="GO" id="GO:0005886">
    <property type="term" value="C:plasma membrane"/>
    <property type="evidence" value="ECO:0007669"/>
    <property type="project" value="UniProtKB-SubCell"/>
</dbReference>
<dbReference type="GO" id="GO:0051991">
    <property type="term" value="F:UDP-N-acetyl-D-glucosamine:N-acetylmuramoyl-L-alanyl-D-glutamyl-meso-2,6-diaminopimelyl-D-alanyl-D-alanine-diphosphoundecaprenol 4-beta-N-acetylglucosaminlytransferase activity"/>
    <property type="evidence" value="ECO:0007669"/>
    <property type="project" value="RHEA"/>
</dbReference>
<dbReference type="GO" id="GO:0050511">
    <property type="term" value="F:undecaprenyldiphospho-muramoylpentapeptide beta-N-acetylglucosaminyltransferase activity"/>
    <property type="evidence" value="ECO:0007669"/>
    <property type="project" value="UniProtKB-UniRule"/>
</dbReference>
<dbReference type="GO" id="GO:0005975">
    <property type="term" value="P:carbohydrate metabolic process"/>
    <property type="evidence" value="ECO:0007669"/>
    <property type="project" value="InterPro"/>
</dbReference>
<dbReference type="GO" id="GO:0051301">
    <property type="term" value="P:cell division"/>
    <property type="evidence" value="ECO:0007669"/>
    <property type="project" value="UniProtKB-KW"/>
</dbReference>
<dbReference type="GO" id="GO:0071555">
    <property type="term" value="P:cell wall organization"/>
    <property type="evidence" value="ECO:0007669"/>
    <property type="project" value="UniProtKB-KW"/>
</dbReference>
<dbReference type="GO" id="GO:0030259">
    <property type="term" value="P:lipid glycosylation"/>
    <property type="evidence" value="ECO:0007669"/>
    <property type="project" value="UniProtKB-UniRule"/>
</dbReference>
<dbReference type="GO" id="GO:0009252">
    <property type="term" value="P:peptidoglycan biosynthetic process"/>
    <property type="evidence" value="ECO:0007669"/>
    <property type="project" value="UniProtKB-UniRule"/>
</dbReference>
<dbReference type="GO" id="GO:0008360">
    <property type="term" value="P:regulation of cell shape"/>
    <property type="evidence" value="ECO:0007669"/>
    <property type="project" value="UniProtKB-KW"/>
</dbReference>
<dbReference type="CDD" id="cd03785">
    <property type="entry name" value="GT28_MurG"/>
    <property type="match status" value="1"/>
</dbReference>
<dbReference type="Gene3D" id="3.40.50.2000">
    <property type="entry name" value="Glycogen Phosphorylase B"/>
    <property type="match status" value="2"/>
</dbReference>
<dbReference type="HAMAP" id="MF_00033">
    <property type="entry name" value="MurG"/>
    <property type="match status" value="1"/>
</dbReference>
<dbReference type="InterPro" id="IPR006009">
    <property type="entry name" value="GlcNAc_MurG"/>
</dbReference>
<dbReference type="InterPro" id="IPR007235">
    <property type="entry name" value="Glyco_trans_28_C"/>
</dbReference>
<dbReference type="InterPro" id="IPR004276">
    <property type="entry name" value="GlycoTrans_28_N"/>
</dbReference>
<dbReference type="NCBIfam" id="TIGR01133">
    <property type="entry name" value="murG"/>
    <property type="match status" value="1"/>
</dbReference>
<dbReference type="PANTHER" id="PTHR21015:SF22">
    <property type="entry name" value="GLYCOSYLTRANSFERASE"/>
    <property type="match status" value="1"/>
</dbReference>
<dbReference type="PANTHER" id="PTHR21015">
    <property type="entry name" value="UDP-N-ACETYLGLUCOSAMINE--N-ACETYLMURAMYL-(PENTAPEPTIDE) PYROPHOSPHORYL-UNDECAPRENOL N-ACETYLGLUCOSAMINE TRANSFERASE 1"/>
    <property type="match status" value="1"/>
</dbReference>
<dbReference type="Pfam" id="PF04101">
    <property type="entry name" value="Glyco_tran_28_C"/>
    <property type="match status" value="1"/>
</dbReference>
<dbReference type="Pfam" id="PF03033">
    <property type="entry name" value="Glyco_transf_28"/>
    <property type="match status" value="1"/>
</dbReference>
<dbReference type="SUPFAM" id="SSF53756">
    <property type="entry name" value="UDP-Glycosyltransferase/glycogen phosphorylase"/>
    <property type="match status" value="1"/>
</dbReference>
<gene>
    <name evidence="1" type="primary">murG</name>
    <name type="ordered locus">amb3848</name>
</gene>
<name>MURG_PARM1</name>
<reference key="1">
    <citation type="journal article" date="2005" name="DNA Res.">
        <title>Complete genome sequence of the facultative anaerobic magnetotactic bacterium Magnetospirillum sp. strain AMB-1.</title>
        <authorList>
            <person name="Matsunaga T."/>
            <person name="Okamura Y."/>
            <person name="Fukuda Y."/>
            <person name="Wahyudi A.T."/>
            <person name="Murase Y."/>
            <person name="Takeyama H."/>
        </authorList>
    </citation>
    <scope>NUCLEOTIDE SEQUENCE [LARGE SCALE GENOMIC DNA]</scope>
    <source>
        <strain>ATCC 700264 / AMB-1</strain>
    </source>
</reference>
<feature type="chain" id="PRO_0000315113" description="UDP-N-acetylglucosamine--N-acetylmuramyl-(pentapeptide) pyrophosphoryl-undecaprenol N-acetylglucosamine transferase">
    <location>
        <begin position="1"/>
        <end position="371"/>
    </location>
</feature>
<feature type="binding site" evidence="1">
    <location>
        <begin position="15"/>
        <end position="17"/>
    </location>
    <ligand>
        <name>UDP-N-acetyl-alpha-D-glucosamine</name>
        <dbReference type="ChEBI" id="CHEBI:57705"/>
    </ligand>
</feature>
<feature type="binding site" evidence="1">
    <location>
        <position position="126"/>
    </location>
    <ligand>
        <name>UDP-N-acetyl-alpha-D-glucosamine</name>
        <dbReference type="ChEBI" id="CHEBI:57705"/>
    </ligand>
</feature>
<feature type="binding site" evidence="1">
    <location>
        <position position="169"/>
    </location>
    <ligand>
        <name>UDP-N-acetyl-alpha-D-glucosamine</name>
        <dbReference type="ChEBI" id="CHEBI:57705"/>
    </ligand>
</feature>
<feature type="binding site" evidence="1">
    <location>
        <position position="197"/>
    </location>
    <ligand>
        <name>UDP-N-acetyl-alpha-D-glucosamine</name>
        <dbReference type="ChEBI" id="CHEBI:57705"/>
    </ligand>
</feature>
<feature type="binding site" evidence="1">
    <location>
        <position position="298"/>
    </location>
    <ligand>
        <name>UDP-N-acetyl-alpha-D-glucosamine</name>
        <dbReference type="ChEBI" id="CHEBI:57705"/>
    </ligand>
</feature>